<accession>Q1GGU2</accession>
<protein>
    <recommendedName>
        <fullName evidence="1">Methylenetetrahydrofolate--tRNA-(uracil-5-)-methyltransferase TrmFO</fullName>
        <ecNumber evidence="1">2.1.1.74</ecNumber>
    </recommendedName>
    <alternativeName>
        <fullName evidence="1">Folate-dependent tRNA (uracil-5-)-methyltransferase</fullName>
    </alternativeName>
    <alternativeName>
        <fullName evidence="1">Folate-dependent tRNA(M-5-U54)-methyltransferase</fullName>
    </alternativeName>
</protein>
<sequence length="446" mass="49166">MTQELHIVGGGMAGSEAAWQAAHMGVDVVIHEMRPKVETFAHQTGNLAEMVCSNSFRSDDDEQNAVGLLHWEMRAANSLIMTTAGEHRLPAGGALAVDRDPFAESVTAKLKALPNVRVSYEEVTDLPTEGHWIFATGPLTSPALGEAIQRETGAERLAFFDAIAPIVYAESIDMSQAWMQSRYDKGETEEERTAYLNCPMTKDQYEAFIDALLAADKTEFHEGETAGYFDGCLPIEVMAERGRETLRHGPMKPVGLTNPHKPDEKAWAVVQLRRDNALGTLFNIVGFQTKMKYGAQTDVFRMIPGLENAKFARLGGIHRNTFLNSPTLLDHEMRLKSKPNIRFAGQVTGVEGYVESAAMGLLAGRMAAAEILGKDLPQVPQDSAMGALIHHITGGAEAKTFQPMNVNFGLFRPVEGLKGGRRGRKDRYKAYTDRAKVAWQEWLTNF</sequence>
<proteinExistence type="inferred from homology"/>
<reference key="1">
    <citation type="submission" date="2006-05" db="EMBL/GenBank/DDBJ databases">
        <title>Complete sequence of chromosome of Silicibacter sp. TM1040.</title>
        <authorList>
            <consortium name="US DOE Joint Genome Institute"/>
            <person name="Copeland A."/>
            <person name="Lucas S."/>
            <person name="Lapidus A."/>
            <person name="Barry K."/>
            <person name="Detter J.C."/>
            <person name="Glavina del Rio T."/>
            <person name="Hammon N."/>
            <person name="Israni S."/>
            <person name="Dalin E."/>
            <person name="Tice H."/>
            <person name="Pitluck S."/>
            <person name="Brettin T."/>
            <person name="Bruce D."/>
            <person name="Han C."/>
            <person name="Tapia R."/>
            <person name="Goodwin L."/>
            <person name="Thompson L.S."/>
            <person name="Gilna P."/>
            <person name="Schmutz J."/>
            <person name="Larimer F."/>
            <person name="Land M."/>
            <person name="Hauser L."/>
            <person name="Kyrpides N."/>
            <person name="Kim E."/>
            <person name="Belas R."/>
            <person name="Moran M.A."/>
            <person name="Buchan A."/>
            <person name="Gonzalez J.M."/>
            <person name="Schell M.A."/>
            <person name="Sun F."/>
            <person name="Richardson P."/>
        </authorList>
    </citation>
    <scope>NUCLEOTIDE SEQUENCE [LARGE SCALE GENOMIC DNA]</scope>
    <source>
        <strain>TM1040</strain>
    </source>
</reference>
<name>TRMFO_RUEST</name>
<comment type="function">
    <text evidence="1">Catalyzes the folate-dependent formation of 5-methyl-uridine at position 54 (M-5-U54) in all tRNAs.</text>
</comment>
<comment type="catalytic activity">
    <reaction evidence="1">
        <text>uridine(54) in tRNA + (6R)-5,10-methylene-5,6,7,8-tetrahydrofolate + NADH + H(+) = 5-methyluridine(54) in tRNA + (6S)-5,6,7,8-tetrahydrofolate + NAD(+)</text>
        <dbReference type="Rhea" id="RHEA:16873"/>
        <dbReference type="Rhea" id="RHEA-COMP:10167"/>
        <dbReference type="Rhea" id="RHEA-COMP:10193"/>
        <dbReference type="ChEBI" id="CHEBI:15378"/>
        <dbReference type="ChEBI" id="CHEBI:15636"/>
        <dbReference type="ChEBI" id="CHEBI:57453"/>
        <dbReference type="ChEBI" id="CHEBI:57540"/>
        <dbReference type="ChEBI" id="CHEBI:57945"/>
        <dbReference type="ChEBI" id="CHEBI:65315"/>
        <dbReference type="ChEBI" id="CHEBI:74447"/>
        <dbReference type="EC" id="2.1.1.74"/>
    </reaction>
</comment>
<comment type="catalytic activity">
    <reaction evidence="1">
        <text>uridine(54) in tRNA + (6R)-5,10-methylene-5,6,7,8-tetrahydrofolate + NADPH + H(+) = 5-methyluridine(54) in tRNA + (6S)-5,6,7,8-tetrahydrofolate + NADP(+)</text>
        <dbReference type="Rhea" id="RHEA:62372"/>
        <dbReference type="Rhea" id="RHEA-COMP:10167"/>
        <dbReference type="Rhea" id="RHEA-COMP:10193"/>
        <dbReference type="ChEBI" id="CHEBI:15378"/>
        <dbReference type="ChEBI" id="CHEBI:15636"/>
        <dbReference type="ChEBI" id="CHEBI:57453"/>
        <dbReference type="ChEBI" id="CHEBI:57783"/>
        <dbReference type="ChEBI" id="CHEBI:58349"/>
        <dbReference type="ChEBI" id="CHEBI:65315"/>
        <dbReference type="ChEBI" id="CHEBI:74447"/>
        <dbReference type="EC" id="2.1.1.74"/>
    </reaction>
</comment>
<comment type="cofactor">
    <cofactor evidence="1">
        <name>FAD</name>
        <dbReference type="ChEBI" id="CHEBI:57692"/>
    </cofactor>
</comment>
<comment type="subcellular location">
    <subcellularLocation>
        <location evidence="1">Cytoplasm</location>
    </subcellularLocation>
</comment>
<comment type="similarity">
    <text evidence="1">Belongs to the MnmG family. TrmFO subfamily.</text>
</comment>
<comment type="sequence caution" evidence="2">
    <conflict type="erroneous initiation">
        <sequence resource="EMBL-CDS" id="ABF64124"/>
    </conflict>
</comment>
<organism>
    <name type="scientific">Ruegeria sp. (strain TM1040)</name>
    <name type="common">Silicibacter sp.</name>
    <dbReference type="NCBI Taxonomy" id="292414"/>
    <lineage>
        <taxon>Bacteria</taxon>
        <taxon>Pseudomonadati</taxon>
        <taxon>Pseudomonadota</taxon>
        <taxon>Alphaproteobacteria</taxon>
        <taxon>Rhodobacterales</taxon>
        <taxon>Roseobacteraceae</taxon>
        <taxon>Ruegeria</taxon>
    </lineage>
</organism>
<keyword id="KW-0963">Cytoplasm</keyword>
<keyword id="KW-0274">FAD</keyword>
<keyword id="KW-0285">Flavoprotein</keyword>
<keyword id="KW-0489">Methyltransferase</keyword>
<keyword id="KW-0520">NAD</keyword>
<keyword id="KW-0521">NADP</keyword>
<keyword id="KW-1185">Reference proteome</keyword>
<keyword id="KW-0808">Transferase</keyword>
<keyword id="KW-0819">tRNA processing</keyword>
<dbReference type="EC" id="2.1.1.74" evidence="1"/>
<dbReference type="EMBL" id="CP000377">
    <property type="protein sequence ID" value="ABF64124.1"/>
    <property type="status" value="ALT_INIT"/>
    <property type="molecule type" value="Genomic_DNA"/>
</dbReference>
<dbReference type="RefSeq" id="WP_044027120.1">
    <property type="nucleotide sequence ID" value="NC_008044.1"/>
</dbReference>
<dbReference type="SMR" id="Q1GGU2"/>
<dbReference type="STRING" id="292414.TM1040_1391"/>
<dbReference type="KEGG" id="sit:TM1040_1391"/>
<dbReference type="eggNOG" id="COG1206">
    <property type="taxonomic scope" value="Bacteria"/>
</dbReference>
<dbReference type="HOGENOM" id="CLU_033057_1_0_5"/>
<dbReference type="OrthoDB" id="9803114at2"/>
<dbReference type="Proteomes" id="UP000000636">
    <property type="component" value="Chromosome"/>
</dbReference>
<dbReference type="GO" id="GO:0005829">
    <property type="term" value="C:cytosol"/>
    <property type="evidence" value="ECO:0007669"/>
    <property type="project" value="TreeGrafter"/>
</dbReference>
<dbReference type="GO" id="GO:0050660">
    <property type="term" value="F:flavin adenine dinucleotide binding"/>
    <property type="evidence" value="ECO:0007669"/>
    <property type="project" value="UniProtKB-UniRule"/>
</dbReference>
<dbReference type="GO" id="GO:0047151">
    <property type="term" value="F:tRNA (uracil(54)-C5)-methyltransferase activity, 5,10-methylenetetrahydrofolate-dependent"/>
    <property type="evidence" value="ECO:0007669"/>
    <property type="project" value="UniProtKB-UniRule"/>
</dbReference>
<dbReference type="GO" id="GO:0030488">
    <property type="term" value="P:tRNA methylation"/>
    <property type="evidence" value="ECO:0007669"/>
    <property type="project" value="TreeGrafter"/>
</dbReference>
<dbReference type="GO" id="GO:0002098">
    <property type="term" value="P:tRNA wobble uridine modification"/>
    <property type="evidence" value="ECO:0007669"/>
    <property type="project" value="TreeGrafter"/>
</dbReference>
<dbReference type="Gene3D" id="3.50.50.60">
    <property type="entry name" value="FAD/NAD(P)-binding domain"/>
    <property type="match status" value="2"/>
</dbReference>
<dbReference type="HAMAP" id="MF_01037">
    <property type="entry name" value="TrmFO"/>
    <property type="match status" value="1"/>
</dbReference>
<dbReference type="InterPro" id="IPR036188">
    <property type="entry name" value="FAD/NAD-bd_sf"/>
</dbReference>
<dbReference type="InterPro" id="IPR002218">
    <property type="entry name" value="MnmG-rel"/>
</dbReference>
<dbReference type="InterPro" id="IPR020595">
    <property type="entry name" value="MnmG-rel_CS"/>
</dbReference>
<dbReference type="InterPro" id="IPR040131">
    <property type="entry name" value="MnmG_N"/>
</dbReference>
<dbReference type="InterPro" id="IPR004417">
    <property type="entry name" value="TrmFO"/>
</dbReference>
<dbReference type="NCBIfam" id="TIGR00137">
    <property type="entry name" value="gid_trmFO"/>
    <property type="match status" value="1"/>
</dbReference>
<dbReference type="NCBIfam" id="NF003739">
    <property type="entry name" value="PRK05335.1"/>
    <property type="match status" value="1"/>
</dbReference>
<dbReference type="PANTHER" id="PTHR11806">
    <property type="entry name" value="GLUCOSE INHIBITED DIVISION PROTEIN A"/>
    <property type="match status" value="1"/>
</dbReference>
<dbReference type="PANTHER" id="PTHR11806:SF2">
    <property type="entry name" value="METHYLENETETRAHYDROFOLATE--TRNA-(URACIL-5-)-METHYLTRANSFERASE TRMFO"/>
    <property type="match status" value="1"/>
</dbReference>
<dbReference type="Pfam" id="PF01134">
    <property type="entry name" value="GIDA"/>
    <property type="match status" value="1"/>
</dbReference>
<dbReference type="SUPFAM" id="SSF51905">
    <property type="entry name" value="FAD/NAD(P)-binding domain"/>
    <property type="match status" value="1"/>
</dbReference>
<dbReference type="PROSITE" id="PS01281">
    <property type="entry name" value="GIDA_2"/>
    <property type="match status" value="1"/>
</dbReference>
<evidence type="ECO:0000255" key="1">
    <source>
        <dbReference type="HAMAP-Rule" id="MF_01037"/>
    </source>
</evidence>
<evidence type="ECO:0000305" key="2"/>
<gene>
    <name evidence="1" type="primary">trmFO</name>
    <name type="ordered locus">TM1040_1391</name>
</gene>
<feature type="chain" id="PRO_0000346393" description="Methylenetetrahydrofolate--tRNA-(uracil-5-)-methyltransferase TrmFO">
    <location>
        <begin position="1"/>
        <end position="446"/>
    </location>
</feature>
<feature type="binding site" evidence="1">
    <location>
        <begin position="9"/>
        <end position="14"/>
    </location>
    <ligand>
        <name>FAD</name>
        <dbReference type="ChEBI" id="CHEBI:57692"/>
    </ligand>
</feature>